<keyword id="KW-0106">Calcium</keyword>
<keyword id="KW-0378">Hydrolase</keyword>
<keyword id="KW-0472">Membrane</keyword>
<keyword id="KW-0479">Metal-binding</keyword>
<keyword id="KW-1185">Reference proteome</keyword>
<keyword id="KW-0812">Transmembrane</keyword>
<keyword id="KW-1133">Transmembrane helix</keyword>
<gene>
    <name type="primary">ARSH</name>
</gene>
<dbReference type="EC" id="3.1.6.-"/>
<dbReference type="EMBL" id="AY875940">
    <property type="protein sequence ID" value="AAW66668.1"/>
    <property type="molecule type" value="mRNA"/>
</dbReference>
<dbReference type="CCDS" id="CCDS35198.1"/>
<dbReference type="RefSeq" id="NP_001011719.1">
    <property type="nucleotide sequence ID" value="NM_001011719.2"/>
</dbReference>
<dbReference type="SMR" id="Q5FYA8"/>
<dbReference type="BioGRID" id="131447">
    <property type="interactions" value="3"/>
</dbReference>
<dbReference type="FunCoup" id="Q5FYA8">
    <property type="interactions" value="3"/>
</dbReference>
<dbReference type="IntAct" id="Q5FYA8">
    <property type="interactions" value="3"/>
</dbReference>
<dbReference type="STRING" id="9606.ENSP00000370522"/>
<dbReference type="GlyGen" id="Q5FYA8">
    <property type="glycosylation" value="2 sites, 1 N-linked glycan (1 site)"/>
</dbReference>
<dbReference type="iPTMnet" id="Q5FYA8"/>
<dbReference type="PhosphoSitePlus" id="Q5FYA8"/>
<dbReference type="BioMuta" id="ARSH"/>
<dbReference type="DMDM" id="74722579"/>
<dbReference type="jPOST" id="Q5FYA8"/>
<dbReference type="MassIVE" id="Q5FYA8"/>
<dbReference type="PaxDb" id="9606-ENSP00000370522"/>
<dbReference type="PeptideAtlas" id="Q5FYA8"/>
<dbReference type="ProteomicsDB" id="62819"/>
<dbReference type="Antibodypedia" id="23512">
    <property type="antibodies" value="142 antibodies from 25 providers"/>
</dbReference>
<dbReference type="DNASU" id="347527"/>
<dbReference type="Ensembl" id="ENST00000381130.3">
    <property type="protein sequence ID" value="ENSP00000370522.3"/>
    <property type="gene ID" value="ENSG00000205667.3"/>
</dbReference>
<dbReference type="GeneID" id="347527"/>
<dbReference type="KEGG" id="hsa:347527"/>
<dbReference type="MANE-Select" id="ENST00000381130.3">
    <property type="protein sequence ID" value="ENSP00000370522.3"/>
    <property type="RefSeq nucleotide sequence ID" value="NM_001011719.2"/>
    <property type="RefSeq protein sequence ID" value="NP_001011719.1"/>
</dbReference>
<dbReference type="UCSC" id="uc011mhj.3">
    <property type="organism name" value="human"/>
</dbReference>
<dbReference type="AGR" id="HGNC:32488"/>
<dbReference type="CTD" id="347527"/>
<dbReference type="DisGeNET" id="347527"/>
<dbReference type="GeneCards" id="ARSH"/>
<dbReference type="HGNC" id="HGNC:32488">
    <property type="gene designation" value="ARSH"/>
</dbReference>
<dbReference type="HPA" id="ENSG00000205667">
    <property type="expression patterns" value="Not detected"/>
</dbReference>
<dbReference type="MalaCards" id="ARSH"/>
<dbReference type="MIM" id="300586">
    <property type="type" value="gene"/>
</dbReference>
<dbReference type="neXtProt" id="NX_Q5FYA8"/>
<dbReference type="OpenTargets" id="ENSG00000205667"/>
<dbReference type="PharmGKB" id="PA143485308"/>
<dbReference type="VEuPathDB" id="HostDB:ENSG00000205667"/>
<dbReference type="eggNOG" id="KOG3867">
    <property type="taxonomic scope" value="Eukaryota"/>
</dbReference>
<dbReference type="GeneTree" id="ENSGT00940000162925"/>
<dbReference type="HOGENOM" id="CLU_006332_13_4_1"/>
<dbReference type="InParanoid" id="Q5FYA8"/>
<dbReference type="OMA" id="CCYGNNT"/>
<dbReference type="OrthoDB" id="103349at2759"/>
<dbReference type="PAN-GO" id="Q5FYA8">
    <property type="GO annotations" value="1 GO annotation based on evolutionary models"/>
</dbReference>
<dbReference type="PhylomeDB" id="Q5FYA8"/>
<dbReference type="TreeFam" id="TF314186"/>
<dbReference type="PathwayCommons" id="Q5FYA8"/>
<dbReference type="Reactome" id="R-HSA-1663150">
    <property type="pathway name" value="The activation of arylsulfatases"/>
</dbReference>
<dbReference type="Reactome" id="R-HSA-9840310">
    <property type="pathway name" value="Glycosphingolipid catabolism"/>
</dbReference>
<dbReference type="SignaLink" id="Q5FYA8"/>
<dbReference type="BioGRID-ORCS" id="347527">
    <property type="hits" value="6 hits in 764 CRISPR screens"/>
</dbReference>
<dbReference type="GenomeRNAi" id="347527"/>
<dbReference type="Pharos" id="Q5FYA8">
    <property type="development level" value="Tbio"/>
</dbReference>
<dbReference type="PRO" id="PR:Q5FYA8"/>
<dbReference type="Proteomes" id="UP000005640">
    <property type="component" value="Chromosome X"/>
</dbReference>
<dbReference type="RNAct" id="Q5FYA8">
    <property type="molecule type" value="protein"/>
</dbReference>
<dbReference type="Bgee" id="ENSG00000205667">
    <property type="expression patterns" value="Expressed in male germ line stem cell (sensu Vertebrata) in testis and 16 other cell types or tissues"/>
</dbReference>
<dbReference type="GO" id="GO:0005788">
    <property type="term" value="C:endoplasmic reticulum lumen"/>
    <property type="evidence" value="ECO:0000304"/>
    <property type="project" value="Reactome"/>
</dbReference>
<dbReference type="GO" id="GO:0016020">
    <property type="term" value="C:membrane"/>
    <property type="evidence" value="ECO:0007669"/>
    <property type="project" value="UniProtKB-SubCell"/>
</dbReference>
<dbReference type="GO" id="GO:0004065">
    <property type="term" value="F:arylsulfatase activity"/>
    <property type="evidence" value="ECO:0000318"/>
    <property type="project" value="GO_Central"/>
</dbReference>
<dbReference type="GO" id="GO:0046872">
    <property type="term" value="F:metal ion binding"/>
    <property type="evidence" value="ECO:0007669"/>
    <property type="project" value="UniProtKB-KW"/>
</dbReference>
<dbReference type="FunFam" id="1.10.287.550:FF:000001">
    <property type="entry name" value="Arylsulfatase E"/>
    <property type="match status" value="1"/>
</dbReference>
<dbReference type="FunFam" id="3.30.1120.10:FF:000001">
    <property type="entry name" value="Arylsulfatase E"/>
    <property type="match status" value="1"/>
</dbReference>
<dbReference type="FunFam" id="3.40.720.10:FF:000233">
    <property type="entry name" value="Predicted protein"/>
    <property type="match status" value="1"/>
</dbReference>
<dbReference type="FunFam" id="3.40.720.10:FF:000174">
    <property type="entry name" value="Uncharacterized protein"/>
    <property type="match status" value="1"/>
</dbReference>
<dbReference type="Gene3D" id="3.30.1120.10">
    <property type="match status" value="1"/>
</dbReference>
<dbReference type="Gene3D" id="3.40.720.10">
    <property type="entry name" value="Alkaline Phosphatase, subunit A"/>
    <property type="match status" value="1"/>
</dbReference>
<dbReference type="Gene3D" id="1.10.287.550">
    <property type="entry name" value="Helix hairpin bin"/>
    <property type="match status" value="1"/>
</dbReference>
<dbReference type="InterPro" id="IPR017850">
    <property type="entry name" value="Alkaline_phosphatase_core_sf"/>
</dbReference>
<dbReference type="InterPro" id="IPR050738">
    <property type="entry name" value="Sulfatase"/>
</dbReference>
<dbReference type="InterPro" id="IPR024607">
    <property type="entry name" value="Sulfatase_CS"/>
</dbReference>
<dbReference type="InterPro" id="IPR000917">
    <property type="entry name" value="Sulfatase_N"/>
</dbReference>
<dbReference type="PANTHER" id="PTHR42693">
    <property type="entry name" value="ARYLSULFATASE FAMILY MEMBER"/>
    <property type="match status" value="1"/>
</dbReference>
<dbReference type="PANTHER" id="PTHR42693:SF16">
    <property type="entry name" value="ARYLSULFATASE H"/>
    <property type="match status" value="1"/>
</dbReference>
<dbReference type="Pfam" id="PF00884">
    <property type="entry name" value="Sulfatase"/>
    <property type="match status" value="1"/>
</dbReference>
<dbReference type="Pfam" id="PF14707">
    <property type="entry name" value="Sulfatase_C"/>
    <property type="match status" value="1"/>
</dbReference>
<dbReference type="SUPFAM" id="SSF53649">
    <property type="entry name" value="Alkaline phosphatase-like"/>
    <property type="match status" value="1"/>
</dbReference>
<dbReference type="PROSITE" id="PS00523">
    <property type="entry name" value="SULFATASE_1"/>
    <property type="match status" value="1"/>
</dbReference>
<dbReference type="PROSITE" id="PS00149">
    <property type="entry name" value="SULFATASE_2"/>
    <property type="match status" value="1"/>
</dbReference>
<protein>
    <recommendedName>
        <fullName>Arylsulfatase H</fullName>
        <shortName>ASH</shortName>
        <ecNumber>3.1.6.-</ecNumber>
    </recommendedName>
</protein>
<comment type="cofactor">
    <cofactor evidence="1">
        <name>Ca(2+)</name>
        <dbReference type="ChEBI" id="CHEBI:29108"/>
    </cofactor>
    <text evidence="1">Binds 1 Ca(2+) ion per subunit.</text>
</comment>
<comment type="subcellular location">
    <subcellularLocation>
        <location evidence="3">Membrane</location>
        <topology evidence="3">Multi-pass membrane protein</topology>
    </subcellularLocation>
</comment>
<comment type="PTM">
    <text evidence="1">The conversion to 3-oxoalanine (also known as C-formylglycine, FGly), of a serine or cysteine residue in prokaryotes and of a cysteine residue in eukaryotes, is critical for catalytic activity.</text>
</comment>
<comment type="similarity">
    <text evidence="3">Belongs to the sulfatase family.</text>
</comment>
<organism>
    <name type="scientific">Homo sapiens</name>
    <name type="common">Human</name>
    <dbReference type="NCBI Taxonomy" id="9606"/>
    <lineage>
        <taxon>Eukaryota</taxon>
        <taxon>Metazoa</taxon>
        <taxon>Chordata</taxon>
        <taxon>Craniata</taxon>
        <taxon>Vertebrata</taxon>
        <taxon>Euteleostomi</taxon>
        <taxon>Mammalia</taxon>
        <taxon>Eutheria</taxon>
        <taxon>Euarchontoglires</taxon>
        <taxon>Primates</taxon>
        <taxon>Haplorrhini</taxon>
        <taxon>Catarrhini</taxon>
        <taxon>Hominidae</taxon>
        <taxon>Homo</taxon>
    </lineage>
</organism>
<sequence>MTRNARPNIVLLMADDLGVGDLCCYGNNSVSTPNIDRLASEGVRLTQHLAAASMCTPSRAAFLTGRYPIRSGMVSAYNLNRAFTWLGGSGGLPTNETTFAKLLQHRGYRTGLIGKWHLGLSCASRNDHCYHPLNHGFHYFYGVPFGLLSDCQASKTPELHRWLRIKLWISTVALALVPFLLLIPKFARWFSVPWKVIFVFALLAFLFFTSWYSSYGFTRRWNCILMRNHEIIQQPMKEEKVASLMLKEALAFIERYKREPFLLFFSFLHVHTPLISKKKFVGRSKYGRYGDNVEEMDWMVGKILDALDQERLANHTLVYFTSDNGGHLEPLDGAVQLGGWNGIYKGGKGMGGWEGGIRVPGIFRWPSVLEAGRVINEPTSLMDIYPTLSYIGGGILSQDRVIDGQNLMPLLEGRASHSDHEFLFHYCGVYLHTVRWHQKDCATVWKAHYVTPKFYPEGTGACYGSGICSCSGDVTYHDPPLLFDISRDPSEALPLNPDNEPLFDSVIKKMEAAIREHRRTLTPVPQQFSVFNTIWKPWLQPCCGTFPFCGCDKEDDILPMAP</sequence>
<proteinExistence type="evidence at transcript level"/>
<feature type="chain" id="PRO_0000295623" description="Arylsulfatase H">
    <location>
        <begin position="1"/>
        <end position="562"/>
    </location>
</feature>
<feature type="transmembrane region" description="Helical" evidence="2">
    <location>
        <begin position="167"/>
        <end position="187"/>
    </location>
</feature>
<feature type="transmembrane region" description="Helical" evidence="2">
    <location>
        <begin position="189"/>
        <end position="209"/>
    </location>
</feature>
<feature type="active site" description="Nucleophile" evidence="1">
    <location>
        <position position="55"/>
    </location>
</feature>
<feature type="active site" evidence="1">
    <location>
        <position position="117"/>
    </location>
</feature>
<feature type="binding site" evidence="1">
    <location>
        <position position="15"/>
    </location>
    <ligand>
        <name>Ca(2+)</name>
        <dbReference type="ChEBI" id="CHEBI:29108"/>
    </ligand>
</feature>
<feature type="binding site" evidence="1">
    <location>
        <position position="16"/>
    </location>
    <ligand>
        <name>Ca(2+)</name>
        <dbReference type="ChEBI" id="CHEBI:29108"/>
    </ligand>
</feature>
<feature type="binding site" description="via 3-oxoalanine" evidence="1">
    <location>
        <position position="55"/>
    </location>
    <ligand>
        <name>Ca(2+)</name>
        <dbReference type="ChEBI" id="CHEBI:29108"/>
    </ligand>
</feature>
<feature type="binding site" evidence="1">
    <location>
        <position position="115"/>
    </location>
    <ligand>
        <name>substrate</name>
    </ligand>
</feature>
<feature type="binding site" evidence="1">
    <location>
        <position position="271"/>
    </location>
    <ligand>
        <name>substrate</name>
    </ligand>
</feature>
<feature type="binding site" evidence="1">
    <location>
        <position position="323"/>
    </location>
    <ligand>
        <name>Ca(2+)</name>
        <dbReference type="ChEBI" id="CHEBI:29108"/>
    </ligand>
</feature>
<feature type="binding site" evidence="1">
    <location>
        <position position="324"/>
    </location>
    <ligand>
        <name>Ca(2+)</name>
        <dbReference type="ChEBI" id="CHEBI:29108"/>
    </ligand>
</feature>
<feature type="binding site" evidence="1">
    <location>
        <position position="348"/>
    </location>
    <ligand>
        <name>substrate</name>
    </ligand>
</feature>
<feature type="modified residue" description="3-oxoalanine (Cys)" evidence="1">
    <location>
        <position position="55"/>
    </location>
</feature>
<reference key="1">
    <citation type="journal article" date="2005" name="Hum. Mol. Genet.">
        <title>Sulfatases and sulfatase modifying factors: an exclusive and promiscuous relationship.</title>
        <authorList>
            <person name="Sardiello M."/>
            <person name="Annunziata I."/>
            <person name="Roma G."/>
            <person name="Ballabio A."/>
        </authorList>
    </citation>
    <scope>NUCLEOTIDE SEQUENCE [MRNA]</scope>
</reference>
<accession>Q5FYA8</accession>
<evidence type="ECO:0000250" key="1">
    <source>
        <dbReference type="UniProtKB" id="P15289"/>
    </source>
</evidence>
<evidence type="ECO:0000255" key="2"/>
<evidence type="ECO:0000305" key="3"/>
<name>ARSH_HUMAN</name>